<organism>
    <name type="scientific">Carboxydothermus hydrogenoformans (strain ATCC BAA-161 / DSM 6008 / Z-2901)</name>
    <dbReference type="NCBI Taxonomy" id="246194"/>
    <lineage>
        <taxon>Bacteria</taxon>
        <taxon>Bacillati</taxon>
        <taxon>Bacillota</taxon>
        <taxon>Clostridia</taxon>
        <taxon>Thermoanaerobacterales</taxon>
        <taxon>Thermoanaerobacteraceae</taxon>
        <taxon>Carboxydothermus</taxon>
    </lineage>
</organism>
<feature type="chain" id="PRO_0000227297" description="UvrABC system protein B">
    <location>
        <begin position="1"/>
        <end position="662"/>
    </location>
</feature>
<feature type="domain" description="Helicase ATP-binding" evidence="1">
    <location>
        <begin position="25"/>
        <end position="412"/>
    </location>
</feature>
<feature type="domain" description="Helicase C-terminal" evidence="1">
    <location>
        <begin position="429"/>
        <end position="595"/>
    </location>
</feature>
<feature type="domain" description="UVR" evidence="1">
    <location>
        <begin position="622"/>
        <end position="657"/>
    </location>
</feature>
<feature type="short sequence motif" description="Beta-hairpin">
    <location>
        <begin position="91"/>
        <end position="114"/>
    </location>
</feature>
<feature type="binding site" evidence="1">
    <location>
        <begin position="38"/>
        <end position="45"/>
    </location>
    <ligand>
        <name>ATP</name>
        <dbReference type="ChEBI" id="CHEBI:30616"/>
    </ligand>
</feature>
<reference key="1">
    <citation type="journal article" date="2005" name="PLoS Genet.">
        <title>Life in hot carbon monoxide: the complete genome sequence of Carboxydothermus hydrogenoformans Z-2901.</title>
        <authorList>
            <person name="Wu M."/>
            <person name="Ren Q."/>
            <person name="Durkin A.S."/>
            <person name="Daugherty S.C."/>
            <person name="Brinkac L.M."/>
            <person name="Dodson R.J."/>
            <person name="Madupu R."/>
            <person name="Sullivan S.A."/>
            <person name="Kolonay J.F."/>
            <person name="Nelson W.C."/>
            <person name="Tallon L.J."/>
            <person name="Jones K.M."/>
            <person name="Ulrich L.E."/>
            <person name="Gonzalez J.M."/>
            <person name="Zhulin I.B."/>
            <person name="Robb F.T."/>
            <person name="Eisen J.A."/>
        </authorList>
    </citation>
    <scope>NUCLEOTIDE SEQUENCE [LARGE SCALE GENOMIC DNA]</scope>
    <source>
        <strain>ATCC BAA-161 / DSM 6008 / Z-2901</strain>
    </source>
</reference>
<sequence>MERFLLKANYTPKGDQPKAIKELTEGIEKGLKMQTLLGVTGSGKTFTMANVIANVNKPTLVIAPNKTLAAQLCAEFREFFPENAVEYFVSYYDYYQPEAYLPATDTYIEKDSAINDEIDKLRHSATAALFERRDVIIVASVSCIYGLGDPQEYRELLLSVRKGQIYEREAILRKLVDIQYERNEYDLTRGKFRVRGDVIEVFPASYTDRAVRIELFGDEVDRILEFDTLTGEIIGELKHVAIFPASHFATSKEKLERAIKSIEEELEERLRYFEERGKLLEAQRLKQRTLYDIEMLREVGYTKGIENYSRHLTGRKPGEPPYTLIDYFPKDFLMIIDESHITIPQIRGMYEGDRSRKEALVEYGFRLPSAFDNRPLKFHEFEARINQVVFVSATPGPYELKHSQKIVEQIIRPTGLVDPEVEVRPTRGQVDDLYGEIKERVARNERVLVTTLTKKMAEDLTEYFREMGVKVRYLHSDIDTLERVEILRDLRLGVFDVLVGINLLREGLDLPEVSLVAILDADKEGYLRSERSLIQTIGRAARNVNGKVIMYADTVTASMQKAIDETNRRRKLQMEYNRKHGITPQTVQKAVRDVIEATRAVTAELPEVKRDFIQKMSAKEFKQYVEKLTREMKEAAKALEFEKAAMLRDLIIELRAQKAVKK</sequence>
<protein>
    <recommendedName>
        <fullName evidence="1">UvrABC system protein B</fullName>
        <shortName evidence="1">Protein UvrB</shortName>
    </recommendedName>
    <alternativeName>
        <fullName evidence="1">Excinuclease ABC subunit B</fullName>
    </alternativeName>
</protein>
<gene>
    <name evidence="1" type="primary">uvrB</name>
    <name type="ordered locus">CHY_0258</name>
</gene>
<name>UVRB_CARHZ</name>
<comment type="function">
    <text evidence="1">The UvrABC repair system catalyzes the recognition and processing of DNA lesions. A damage recognition complex composed of 2 UvrA and 2 UvrB subunits scans DNA for abnormalities. Upon binding of the UvrA(2)B(2) complex to a putative damaged site, the DNA wraps around one UvrB monomer. DNA wrap is dependent on ATP binding by UvrB and probably causes local melting of the DNA helix, facilitating insertion of UvrB beta-hairpin between the DNA strands. Then UvrB probes one DNA strand for the presence of a lesion. If a lesion is found the UvrA subunits dissociate and the UvrB-DNA preincision complex is formed. This complex is subsequently bound by UvrC and the second UvrB is released. If no lesion is found, the DNA wraps around the other UvrB subunit that will check the other stand for damage.</text>
</comment>
<comment type="subunit">
    <text evidence="1">Forms a heterotetramer with UvrA during the search for lesions. Interacts with UvrC in an incision complex.</text>
</comment>
<comment type="subcellular location">
    <subcellularLocation>
        <location evidence="1">Cytoplasm</location>
    </subcellularLocation>
</comment>
<comment type="domain">
    <text evidence="1">The beta-hairpin motif is involved in DNA binding.</text>
</comment>
<comment type="similarity">
    <text evidence="1">Belongs to the UvrB family.</text>
</comment>
<accession>Q3AFF4</accession>
<keyword id="KW-0067">ATP-binding</keyword>
<keyword id="KW-0963">Cytoplasm</keyword>
<keyword id="KW-0227">DNA damage</keyword>
<keyword id="KW-0228">DNA excision</keyword>
<keyword id="KW-0234">DNA repair</keyword>
<keyword id="KW-0267">Excision nuclease</keyword>
<keyword id="KW-0547">Nucleotide-binding</keyword>
<keyword id="KW-1185">Reference proteome</keyword>
<keyword id="KW-0742">SOS response</keyword>
<evidence type="ECO:0000255" key="1">
    <source>
        <dbReference type="HAMAP-Rule" id="MF_00204"/>
    </source>
</evidence>
<proteinExistence type="inferred from homology"/>
<dbReference type="EMBL" id="CP000141">
    <property type="protein sequence ID" value="ABB14660.1"/>
    <property type="molecule type" value="Genomic_DNA"/>
</dbReference>
<dbReference type="RefSeq" id="WP_011343206.1">
    <property type="nucleotide sequence ID" value="NC_007503.1"/>
</dbReference>
<dbReference type="SMR" id="Q3AFF4"/>
<dbReference type="FunCoup" id="Q3AFF4">
    <property type="interactions" value="313"/>
</dbReference>
<dbReference type="STRING" id="246194.CHY_0258"/>
<dbReference type="KEGG" id="chy:CHY_0258"/>
<dbReference type="eggNOG" id="COG0556">
    <property type="taxonomic scope" value="Bacteria"/>
</dbReference>
<dbReference type="HOGENOM" id="CLU_009621_2_1_9"/>
<dbReference type="InParanoid" id="Q3AFF4"/>
<dbReference type="OrthoDB" id="9806651at2"/>
<dbReference type="Proteomes" id="UP000002706">
    <property type="component" value="Chromosome"/>
</dbReference>
<dbReference type="GO" id="GO:0005737">
    <property type="term" value="C:cytoplasm"/>
    <property type="evidence" value="ECO:0007669"/>
    <property type="project" value="UniProtKB-SubCell"/>
</dbReference>
<dbReference type="GO" id="GO:0009380">
    <property type="term" value="C:excinuclease repair complex"/>
    <property type="evidence" value="ECO:0007669"/>
    <property type="project" value="InterPro"/>
</dbReference>
<dbReference type="GO" id="GO:0005524">
    <property type="term" value="F:ATP binding"/>
    <property type="evidence" value="ECO:0007669"/>
    <property type="project" value="UniProtKB-UniRule"/>
</dbReference>
<dbReference type="GO" id="GO:0016887">
    <property type="term" value="F:ATP hydrolysis activity"/>
    <property type="evidence" value="ECO:0007669"/>
    <property type="project" value="InterPro"/>
</dbReference>
<dbReference type="GO" id="GO:0003677">
    <property type="term" value="F:DNA binding"/>
    <property type="evidence" value="ECO:0007669"/>
    <property type="project" value="UniProtKB-UniRule"/>
</dbReference>
<dbReference type="GO" id="GO:0009381">
    <property type="term" value="F:excinuclease ABC activity"/>
    <property type="evidence" value="ECO:0007669"/>
    <property type="project" value="UniProtKB-UniRule"/>
</dbReference>
<dbReference type="GO" id="GO:0006289">
    <property type="term" value="P:nucleotide-excision repair"/>
    <property type="evidence" value="ECO:0007669"/>
    <property type="project" value="UniProtKB-UniRule"/>
</dbReference>
<dbReference type="GO" id="GO:0009432">
    <property type="term" value="P:SOS response"/>
    <property type="evidence" value="ECO:0007669"/>
    <property type="project" value="UniProtKB-UniRule"/>
</dbReference>
<dbReference type="CDD" id="cd17916">
    <property type="entry name" value="DEXHc_UvrB"/>
    <property type="match status" value="1"/>
</dbReference>
<dbReference type="CDD" id="cd18790">
    <property type="entry name" value="SF2_C_UvrB"/>
    <property type="match status" value="1"/>
</dbReference>
<dbReference type="Gene3D" id="3.40.50.300">
    <property type="entry name" value="P-loop containing nucleotide triphosphate hydrolases"/>
    <property type="match status" value="3"/>
</dbReference>
<dbReference type="Gene3D" id="4.10.860.10">
    <property type="entry name" value="UVR domain"/>
    <property type="match status" value="1"/>
</dbReference>
<dbReference type="HAMAP" id="MF_00204">
    <property type="entry name" value="UvrB"/>
    <property type="match status" value="1"/>
</dbReference>
<dbReference type="InterPro" id="IPR006935">
    <property type="entry name" value="Helicase/UvrB_N"/>
</dbReference>
<dbReference type="InterPro" id="IPR014001">
    <property type="entry name" value="Helicase_ATP-bd"/>
</dbReference>
<dbReference type="InterPro" id="IPR001650">
    <property type="entry name" value="Helicase_C-like"/>
</dbReference>
<dbReference type="InterPro" id="IPR027417">
    <property type="entry name" value="P-loop_NTPase"/>
</dbReference>
<dbReference type="InterPro" id="IPR001943">
    <property type="entry name" value="UVR_dom"/>
</dbReference>
<dbReference type="InterPro" id="IPR036876">
    <property type="entry name" value="UVR_dom_sf"/>
</dbReference>
<dbReference type="InterPro" id="IPR004807">
    <property type="entry name" value="UvrB"/>
</dbReference>
<dbReference type="InterPro" id="IPR041471">
    <property type="entry name" value="UvrB_inter"/>
</dbReference>
<dbReference type="InterPro" id="IPR024759">
    <property type="entry name" value="UvrB_YAD/RRR_dom"/>
</dbReference>
<dbReference type="NCBIfam" id="NF003673">
    <property type="entry name" value="PRK05298.1"/>
    <property type="match status" value="1"/>
</dbReference>
<dbReference type="NCBIfam" id="TIGR00631">
    <property type="entry name" value="uvrb"/>
    <property type="match status" value="1"/>
</dbReference>
<dbReference type="PANTHER" id="PTHR24029">
    <property type="entry name" value="UVRABC SYSTEM PROTEIN B"/>
    <property type="match status" value="1"/>
</dbReference>
<dbReference type="PANTHER" id="PTHR24029:SF0">
    <property type="entry name" value="UVRABC SYSTEM PROTEIN B"/>
    <property type="match status" value="1"/>
</dbReference>
<dbReference type="Pfam" id="PF00271">
    <property type="entry name" value="Helicase_C"/>
    <property type="match status" value="1"/>
</dbReference>
<dbReference type="Pfam" id="PF04851">
    <property type="entry name" value="ResIII"/>
    <property type="match status" value="1"/>
</dbReference>
<dbReference type="Pfam" id="PF02151">
    <property type="entry name" value="UVR"/>
    <property type="match status" value="1"/>
</dbReference>
<dbReference type="Pfam" id="PF12344">
    <property type="entry name" value="UvrB"/>
    <property type="match status" value="1"/>
</dbReference>
<dbReference type="Pfam" id="PF17757">
    <property type="entry name" value="UvrB_inter"/>
    <property type="match status" value="1"/>
</dbReference>
<dbReference type="SMART" id="SM00487">
    <property type="entry name" value="DEXDc"/>
    <property type="match status" value="1"/>
</dbReference>
<dbReference type="SMART" id="SM00490">
    <property type="entry name" value="HELICc"/>
    <property type="match status" value="1"/>
</dbReference>
<dbReference type="SUPFAM" id="SSF46600">
    <property type="entry name" value="C-terminal UvrC-binding domain of UvrB"/>
    <property type="match status" value="1"/>
</dbReference>
<dbReference type="SUPFAM" id="SSF52540">
    <property type="entry name" value="P-loop containing nucleoside triphosphate hydrolases"/>
    <property type="match status" value="2"/>
</dbReference>
<dbReference type="PROSITE" id="PS51192">
    <property type="entry name" value="HELICASE_ATP_BIND_1"/>
    <property type="match status" value="1"/>
</dbReference>
<dbReference type="PROSITE" id="PS51194">
    <property type="entry name" value="HELICASE_CTER"/>
    <property type="match status" value="1"/>
</dbReference>
<dbReference type="PROSITE" id="PS50151">
    <property type="entry name" value="UVR"/>
    <property type="match status" value="1"/>
</dbReference>